<feature type="chain" id="PRO_1000212667" description="Probable glycine dehydrogenase (decarboxylating) subunit 1">
    <location>
        <begin position="1"/>
        <end position="455"/>
    </location>
</feature>
<protein>
    <recommendedName>
        <fullName evidence="1">Probable glycine dehydrogenase (decarboxylating) subunit 1</fullName>
        <ecNumber evidence="1">1.4.4.2</ecNumber>
    </recommendedName>
    <alternativeName>
        <fullName evidence="1">Glycine cleavage system P-protein subunit 1</fullName>
    </alternativeName>
    <alternativeName>
        <fullName evidence="1">Glycine decarboxylase subunit 1</fullName>
    </alternativeName>
    <alternativeName>
        <fullName evidence="1">Glycine dehydrogenase (aminomethyl-transferring) subunit 1</fullName>
    </alternativeName>
</protein>
<evidence type="ECO:0000255" key="1">
    <source>
        <dbReference type="HAMAP-Rule" id="MF_00712"/>
    </source>
</evidence>
<comment type="function">
    <text evidence="1">The glycine cleavage system catalyzes the degradation of glycine. The P protein binds the alpha-amino group of glycine through its pyridoxal phosphate cofactor; CO(2) is released and the remaining methylamine moiety is then transferred to the lipoamide cofactor of the H protein.</text>
</comment>
<comment type="catalytic activity">
    <reaction evidence="1">
        <text>N(6)-[(R)-lipoyl]-L-lysyl-[glycine-cleavage complex H protein] + glycine + H(+) = N(6)-[(R)-S(8)-aminomethyldihydrolipoyl]-L-lysyl-[glycine-cleavage complex H protein] + CO2</text>
        <dbReference type="Rhea" id="RHEA:24304"/>
        <dbReference type="Rhea" id="RHEA-COMP:10494"/>
        <dbReference type="Rhea" id="RHEA-COMP:10495"/>
        <dbReference type="ChEBI" id="CHEBI:15378"/>
        <dbReference type="ChEBI" id="CHEBI:16526"/>
        <dbReference type="ChEBI" id="CHEBI:57305"/>
        <dbReference type="ChEBI" id="CHEBI:83099"/>
        <dbReference type="ChEBI" id="CHEBI:83143"/>
        <dbReference type="EC" id="1.4.4.2"/>
    </reaction>
</comment>
<comment type="subunit">
    <text evidence="1">The glycine cleavage system is composed of four proteins: P, T, L and H. In this organism, the P 'protein' is a heterodimer of two subunits.</text>
</comment>
<comment type="similarity">
    <text evidence="1">Belongs to the GcvP family. N-terminal subunit subfamily.</text>
</comment>
<keyword id="KW-0560">Oxidoreductase</keyword>
<gene>
    <name evidence="1" type="primary">gcvPA</name>
    <name type="ordered locus">M1425_1303</name>
</gene>
<organism>
    <name type="scientific">Saccharolobus islandicus (strain M.14.25 / Kamchatka #1)</name>
    <name type="common">Sulfolobus islandicus</name>
    <dbReference type="NCBI Taxonomy" id="427317"/>
    <lineage>
        <taxon>Archaea</taxon>
        <taxon>Thermoproteota</taxon>
        <taxon>Thermoprotei</taxon>
        <taxon>Sulfolobales</taxon>
        <taxon>Sulfolobaceae</taxon>
        <taxon>Saccharolobus</taxon>
    </lineage>
</organism>
<proteinExistence type="inferred from homology"/>
<accession>C3MUU8</accession>
<sequence length="455" mass="51276">MYKHPWLPNLDLIDEMLKEIGVNSLDELFNDIPAEIKINRLLNVAKGKPLSEYEIEKEINEKVKKNVELQAPPFIGAGICPHYIPNVVKFIIGRSEFYTSYTPYQPEISQGLLQALFEYQSLMAELLDMDVVNASMYDWGSALAEAVLMANRINGKKTVLVPENANPFHKEVVRTWIGGKGIKIEEVKYDKNSGELDLEDLEKKSNIDDISAIYIQQPNFFGIFESNIEHVIDVAKHKRALSIVGVNPLSLGLIKPPGSYEADIVVGDGQELGLPLNFGGPLMGVFAVRWDMSLVRQMPGRIVGITKDTNGKMGFTLILQTREQFIKREKATSNITTNEALLAIANAVYLSLLGKEGMRELAEEIYFRSHYAAKKLTEIDNVSMPFRSDFFEEFAIRFPIEYDKISNKLKERKLQGGLKLSDYTSLFCVTEVHDKKSIDLLVSTIQEMINGVETS</sequence>
<dbReference type="EC" id="1.4.4.2" evidence="1"/>
<dbReference type="EMBL" id="CP001400">
    <property type="protein sequence ID" value="ACP38058.1"/>
    <property type="molecule type" value="Genomic_DNA"/>
</dbReference>
<dbReference type="RefSeq" id="WP_012711309.1">
    <property type="nucleotide sequence ID" value="NC_012588.1"/>
</dbReference>
<dbReference type="SMR" id="C3MUU8"/>
<dbReference type="GeneID" id="84061616"/>
<dbReference type="KEGG" id="sia:M1425_1303"/>
<dbReference type="HOGENOM" id="CLU_004620_0_2_2"/>
<dbReference type="Proteomes" id="UP000001350">
    <property type="component" value="Chromosome"/>
</dbReference>
<dbReference type="GO" id="GO:0004375">
    <property type="term" value="F:glycine dehydrogenase (decarboxylating) activity"/>
    <property type="evidence" value="ECO:0007669"/>
    <property type="project" value="UniProtKB-EC"/>
</dbReference>
<dbReference type="GO" id="GO:0019464">
    <property type="term" value="P:glycine decarboxylation via glycine cleavage system"/>
    <property type="evidence" value="ECO:0007669"/>
    <property type="project" value="UniProtKB-UniRule"/>
</dbReference>
<dbReference type="GO" id="GO:0009116">
    <property type="term" value="P:nucleoside metabolic process"/>
    <property type="evidence" value="ECO:0007669"/>
    <property type="project" value="InterPro"/>
</dbReference>
<dbReference type="CDD" id="cd00613">
    <property type="entry name" value="GDC-P"/>
    <property type="match status" value="1"/>
</dbReference>
<dbReference type="Gene3D" id="3.90.1150.10">
    <property type="entry name" value="Aspartate Aminotransferase, domain 1"/>
    <property type="match status" value="1"/>
</dbReference>
<dbReference type="Gene3D" id="3.40.640.10">
    <property type="entry name" value="Type I PLP-dependent aspartate aminotransferase-like (Major domain)"/>
    <property type="match status" value="1"/>
</dbReference>
<dbReference type="HAMAP" id="MF_00712">
    <property type="entry name" value="GcvPA"/>
    <property type="match status" value="1"/>
</dbReference>
<dbReference type="InterPro" id="IPR023010">
    <property type="entry name" value="GcvPA"/>
</dbReference>
<dbReference type="InterPro" id="IPR049315">
    <property type="entry name" value="GDC-P_N"/>
</dbReference>
<dbReference type="InterPro" id="IPR020581">
    <property type="entry name" value="GDC_P"/>
</dbReference>
<dbReference type="InterPro" id="IPR015424">
    <property type="entry name" value="PyrdxlP-dep_Trfase"/>
</dbReference>
<dbReference type="InterPro" id="IPR015421">
    <property type="entry name" value="PyrdxlP-dep_Trfase_major"/>
</dbReference>
<dbReference type="InterPro" id="IPR015422">
    <property type="entry name" value="PyrdxlP-dep_Trfase_small"/>
</dbReference>
<dbReference type="NCBIfam" id="NF001696">
    <property type="entry name" value="PRK00451.1"/>
    <property type="match status" value="1"/>
</dbReference>
<dbReference type="PANTHER" id="PTHR42806">
    <property type="entry name" value="GLYCINE CLEAVAGE SYSTEM P-PROTEIN"/>
    <property type="match status" value="1"/>
</dbReference>
<dbReference type="PANTHER" id="PTHR42806:SF1">
    <property type="entry name" value="GLYCINE DEHYDROGENASE (DECARBOXYLATING)"/>
    <property type="match status" value="1"/>
</dbReference>
<dbReference type="Pfam" id="PF02347">
    <property type="entry name" value="GDC-P"/>
    <property type="match status" value="1"/>
</dbReference>
<dbReference type="PIRSF" id="PIRSF006815">
    <property type="entry name" value="GcvPA"/>
    <property type="match status" value="1"/>
</dbReference>
<dbReference type="SUPFAM" id="SSF53383">
    <property type="entry name" value="PLP-dependent transferases"/>
    <property type="match status" value="1"/>
</dbReference>
<reference key="1">
    <citation type="journal article" date="2009" name="Proc. Natl. Acad. Sci. U.S.A.">
        <title>Biogeography of the Sulfolobus islandicus pan-genome.</title>
        <authorList>
            <person name="Reno M.L."/>
            <person name="Held N.L."/>
            <person name="Fields C.J."/>
            <person name="Burke P.V."/>
            <person name="Whitaker R.J."/>
        </authorList>
    </citation>
    <scope>NUCLEOTIDE SEQUENCE [LARGE SCALE GENOMIC DNA]</scope>
    <source>
        <strain>M.14.25 / Kamchatka #1</strain>
    </source>
</reference>
<name>GCSPA_SACI4</name>